<feature type="chain" id="PRO_0000395477" description="65-kDa microtubule-associated protein 6">
    <location>
        <begin position="1"/>
        <end position="608"/>
    </location>
</feature>
<feature type="region of interest" description="Disordered" evidence="4">
    <location>
        <begin position="501"/>
        <end position="565"/>
    </location>
</feature>
<feature type="coiled-coil region" evidence="3">
    <location>
        <begin position="164"/>
        <end position="186"/>
    </location>
</feature>
<feature type="coiled-coil region" evidence="3">
    <location>
        <begin position="368"/>
        <end position="388"/>
    </location>
</feature>
<feature type="coiled-coil region" evidence="3">
    <location>
        <begin position="467"/>
        <end position="503"/>
    </location>
</feature>
<feature type="compositionally biased region" description="Low complexity" evidence="4">
    <location>
        <begin position="510"/>
        <end position="523"/>
    </location>
</feature>
<feature type="compositionally biased region" description="Polar residues" evidence="4">
    <location>
        <begin position="526"/>
        <end position="535"/>
    </location>
</feature>
<feature type="site" description="Microtubule binding" evidence="1">
    <location>
        <position position="419"/>
    </location>
</feature>
<feature type="site" description="Microtubule binding" evidence="1">
    <location>
        <position position="430"/>
    </location>
</feature>
<feature type="modified residue" description="Phosphoserine" evidence="2">
    <location>
        <position position="513"/>
    </location>
</feature>
<feature type="modified residue" description="Phosphoserine" evidence="2">
    <location>
        <position position="604"/>
    </location>
</feature>
<feature type="splice variant" id="VSP_039480" description="In isoform 2." evidence="6">
    <location>
        <begin position="1"/>
        <end position="41"/>
    </location>
</feature>
<feature type="sequence conflict" description="In Ref. 4; BAF00853." evidence="7" ref="4">
    <original>Q</original>
    <variation>L</variation>
    <location>
        <position position="128"/>
    </location>
</feature>
<keyword id="KW-0025">Alternative splicing</keyword>
<keyword id="KW-0131">Cell cycle</keyword>
<keyword id="KW-0132">Cell division</keyword>
<keyword id="KW-0175">Coiled coil</keyword>
<keyword id="KW-0963">Cytoplasm</keyword>
<keyword id="KW-0206">Cytoskeleton</keyword>
<keyword id="KW-0493">Microtubule</keyword>
<keyword id="KW-0496">Mitochondrion</keyword>
<keyword id="KW-0498">Mitosis</keyword>
<keyword id="KW-0539">Nucleus</keyword>
<keyword id="KW-0597">Phosphoprotein</keyword>
<keyword id="KW-1185">Reference proteome</keyword>
<sequence>MLEIGSPNALFFRTNTTCNNLLRELQKIWVEIGETETEKDRMLMELERECLQIYQRKVDEAANSKAKLHQSVASIEAEVASLMAALGVLNINSPIKLDKGSKSLKEKLAAVTPLVEELRIQKEERMKQFSDIKAQIEKISGEISGYSDHLNKAMNISLTLEEQDLTLRNLNEYQTHLRTLQKEKSDRLNKVLGYVNEVHALCGVLGVDFSQTVSAVHPSLHRTDQEQSTNISDSTLEGLEHMIQKLKTERKSRFQKLKDVVASLFELWNLMDTPQEDRTKFGKVTYVVRSSEANITEPGILSTETIEQVSTEVDSLSKLKASRMKELVMKRRSELEDLCRLTHIQPDTSTSAEKSTALIDSGLVDPSELLANIEMQINKIKDEAQSRKDIMDRIDRWLSACEEENWLEEYNLDENRYSAGRGGHVNLKRAERARVTINKIPGMVDTLIKKTLVWEEDMQKSFLYDGVRLVNILEDYKLTRKQQEEEKKRYRDQKKRQDLLLTQRESIYGSKPSPRRSSSFRKPNGFNISNGNGSVPPTPRRGSVGTTTPDVLLTPRSYSGHHRQNGYFKEVRRLSTTPLNYVAMQKEDTVSTTYTSIYSSEPDSPLQG</sequence>
<accession>Q9SIS3</accession>
<accession>Q0WPU6</accession>
<accession>Q2V4B4</accession>
<evidence type="ECO:0000250" key="1"/>
<evidence type="ECO:0000250" key="2">
    <source>
        <dbReference type="UniProtKB" id="Q9FLP0"/>
    </source>
</evidence>
<evidence type="ECO:0000255" key="3"/>
<evidence type="ECO:0000256" key="4">
    <source>
        <dbReference type="SAM" id="MobiDB-lite"/>
    </source>
</evidence>
<evidence type="ECO:0000269" key="5">
    <source>
    </source>
</evidence>
<evidence type="ECO:0000303" key="6">
    <source ref="4"/>
</evidence>
<evidence type="ECO:0000305" key="7"/>
<organism>
    <name type="scientific">Arabidopsis thaliana</name>
    <name type="common">Mouse-ear cress</name>
    <dbReference type="NCBI Taxonomy" id="3702"/>
    <lineage>
        <taxon>Eukaryota</taxon>
        <taxon>Viridiplantae</taxon>
        <taxon>Streptophyta</taxon>
        <taxon>Embryophyta</taxon>
        <taxon>Tracheophyta</taxon>
        <taxon>Spermatophyta</taxon>
        <taxon>Magnoliopsida</taxon>
        <taxon>eudicotyledons</taxon>
        <taxon>Gunneridae</taxon>
        <taxon>Pentapetalae</taxon>
        <taxon>rosids</taxon>
        <taxon>malvids</taxon>
        <taxon>Brassicales</taxon>
        <taxon>Brassicaceae</taxon>
        <taxon>Camelineae</taxon>
        <taxon>Arabidopsis</taxon>
    </lineage>
</organism>
<proteinExistence type="evidence at protein level"/>
<reference key="1">
    <citation type="journal article" date="1999" name="Nature">
        <title>Sequence and analysis of chromosome 2 of the plant Arabidopsis thaliana.</title>
        <authorList>
            <person name="Lin X."/>
            <person name="Kaul S."/>
            <person name="Rounsley S.D."/>
            <person name="Shea T.P."/>
            <person name="Benito M.-I."/>
            <person name="Town C.D."/>
            <person name="Fujii C.Y."/>
            <person name="Mason T.M."/>
            <person name="Bowman C.L."/>
            <person name="Barnstead M.E."/>
            <person name="Feldblyum T.V."/>
            <person name="Buell C.R."/>
            <person name="Ketchum K.A."/>
            <person name="Lee J.J."/>
            <person name="Ronning C.M."/>
            <person name="Koo H.L."/>
            <person name="Moffat K.S."/>
            <person name="Cronin L.A."/>
            <person name="Shen M."/>
            <person name="Pai G."/>
            <person name="Van Aken S."/>
            <person name="Umayam L."/>
            <person name="Tallon L.J."/>
            <person name="Gill J.E."/>
            <person name="Adams M.D."/>
            <person name="Carrera A.J."/>
            <person name="Creasy T.H."/>
            <person name="Goodman H.M."/>
            <person name="Somerville C.R."/>
            <person name="Copenhaver G.P."/>
            <person name="Preuss D."/>
            <person name="Nierman W.C."/>
            <person name="White O."/>
            <person name="Eisen J.A."/>
            <person name="Salzberg S.L."/>
            <person name="Fraser C.M."/>
            <person name="Venter J.C."/>
        </authorList>
    </citation>
    <scope>NUCLEOTIDE SEQUENCE [LARGE SCALE GENOMIC DNA]</scope>
    <source>
        <strain>cv. Columbia</strain>
    </source>
</reference>
<reference key="2">
    <citation type="journal article" date="2017" name="Plant J.">
        <title>Araport11: a complete reannotation of the Arabidopsis thaliana reference genome.</title>
        <authorList>
            <person name="Cheng C.Y."/>
            <person name="Krishnakumar V."/>
            <person name="Chan A.P."/>
            <person name="Thibaud-Nissen F."/>
            <person name="Schobel S."/>
            <person name="Town C.D."/>
        </authorList>
    </citation>
    <scope>GENOME REANNOTATION</scope>
    <source>
        <strain>cv. Columbia</strain>
    </source>
</reference>
<reference key="3">
    <citation type="journal article" date="2009" name="DNA Res.">
        <title>Analysis of multiple occurrences of alternative splicing events in Arabidopsis thaliana using novel sequenced full-length cDNAs.</title>
        <authorList>
            <person name="Iida K."/>
            <person name="Fukami-Kobayashi K."/>
            <person name="Toyoda A."/>
            <person name="Sakaki Y."/>
            <person name="Kobayashi M."/>
            <person name="Seki M."/>
            <person name="Shinozaki K."/>
        </authorList>
    </citation>
    <scope>NUCLEOTIDE SEQUENCE [LARGE SCALE MRNA] (ISOFORM 1)</scope>
    <source>
        <strain>cv. Columbia</strain>
    </source>
</reference>
<reference key="4">
    <citation type="submission" date="2006-07" db="EMBL/GenBank/DDBJ databases">
        <title>Large-scale analysis of RIKEN Arabidopsis full-length (RAFL) cDNAs.</title>
        <authorList>
            <person name="Totoki Y."/>
            <person name="Seki M."/>
            <person name="Ishida J."/>
            <person name="Nakajima M."/>
            <person name="Enju A."/>
            <person name="Kamiya A."/>
            <person name="Narusaka M."/>
            <person name="Shin-i T."/>
            <person name="Nakagawa M."/>
            <person name="Sakamoto N."/>
            <person name="Oishi K."/>
            <person name="Kohara Y."/>
            <person name="Kobayashi M."/>
            <person name="Toyoda A."/>
            <person name="Sakaki Y."/>
            <person name="Sakurai T."/>
            <person name="Iida K."/>
            <person name="Akiyama K."/>
            <person name="Satou M."/>
            <person name="Toyoda T."/>
            <person name="Konagaya A."/>
            <person name="Carninci P."/>
            <person name="Kawai J."/>
            <person name="Hayashizaki Y."/>
            <person name="Shinozaki K."/>
        </authorList>
    </citation>
    <scope>NUCLEOTIDE SEQUENCE [LARGE SCALE MRNA] (ISOFORM 2)</scope>
    <source>
        <strain>cv. Columbia</strain>
    </source>
</reference>
<reference key="5">
    <citation type="journal article" date="2002" name="Plant Mol. Biol.">
        <title>The plant cytoskeleton: recent advances in the study of the plant microtubule-associated proteins MAP-65, MAP-190 and the Xenopus MAP215-like protein, MOR1.</title>
        <authorList>
            <person name="Hussey P.J."/>
            <person name="Hawkins T.J."/>
            <person name="Igarashi H."/>
            <person name="Kaloriti D."/>
            <person name="Smertenko A."/>
        </authorList>
    </citation>
    <scope>GENE FAMILY</scope>
    <scope>NOMENCLATURE</scope>
</reference>
<reference key="6">
    <citation type="journal article" date="2004" name="Plant J.">
        <title>Molecular dissection of plant cytokinesis and phragmoplast structure: a survey of GFP-tagged proteins.</title>
        <authorList>
            <person name="Van Damme D."/>
            <person name="Bouget F.-Y."/>
            <person name="Van Poucke K."/>
            <person name="Inze D."/>
            <person name="Geelen D."/>
        </authorList>
    </citation>
    <scope>INTERACTION WITH MICROTUBULES</scope>
    <scope>SUBCELLULAR LOCATION</scope>
</reference>
<reference key="7">
    <citation type="journal article" date="2005" name="Plant Physiol.">
        <title>Two microtubule-associated proteins of the Arabidopsis MAP65 family function differently on microtubules.</title>
        <authorList>
            <person name="Mao T."/>
            <person name="Jin L."/>
            <person name="Li H."/>
            <person name="Liu B."/>
            <person name="Yuan M."/>
        </authorList>
    </citation>
    <scope>FUNCTION</scope>
    <scope>SUBUNIT</scope>
    <scope>SUBCELLULAR LOCATION</scope>
</reference>
<reference key="8">
    <citation type="journal article" date="2008" name="Plant Cell">
        <title>The C-terminal variable region specifies the dynamic properties of Arabidopsis microtubule-associated protein MAP65 isotypes.</title>
        <authorList>
            <person name="Smertenko A.P."/>
            <person name="Kaloriti D."/>
            <person name="Chang H.-Y."/>
            <person name="Fiserova J."/>
            <person name="Opatrny Z."/>
            <person name="Hussey P.J."/>
        </authorList>
    </citation>
    <scope>SUBCELLULAR LOCATION</scope>
</reference>
<comment type="function">
    <text evidence="5">Microtubule-associated protein that mediates the formation of a mesh-like stable and dense network formed by individual microtubules (MT). Confers MT resistance to high concentration of NaCl.</text>
</comment>
<comment type="subunit">
    <text evidence="1 5">Forms a dimer (By similarity). Binds to polymerized centrally located endocytic MT.</text>
</comment>
<comment type="subcellular location">
    <subcellularLocation>
        <location evidence="1">Nucleus</location>
    </subcellularLocation>
    <subcellularLocation>
        <location>Cytoplasm</location>
    </subcellularLocation>
    <subcellularLocation>
        <location>Mitochondrion</location>
    </subcellularLocation>
    <subcellularLocation>
        <location>Cytoplasm</location>
        <location>Cytoskeleton</location>
        <location>Phragmoplast</location>
    </subcellularLocation>
    <text>Associated with mitochondria. Binds to MT in preprophase band, during anaphase, and in phragmoplast.</text>
</comment>
<comment type="alternative products">
    <event type="alternative splicing"/>
    <isoform>
        <id>Q9SIS3-1</id>
        <name>1</name>
        <sequence type="displayed"/>
    </isoform>
    <isoform>
        <id>Q9SIS3-2</id>
        <name>2</name>
        <sequence type="described" ref="VSP_039480"/>
    </isoform>
</comment>
<comment type="similarity">
    <text evidence="7">Belongs to the MAP65/ASE1 family.</text>
</comment>
<protein>
    <recommendedName>
        <fullName>65-kDa microtubule-associated protein 6</fullName>
        <shortName>AtMAP65-6</shortName>
    </recommendedName>
</protein>
<dbReference type="EMBL" id="AC007069">
    <property type="protein sequence ID" value="AAD21782.1"/>
    <property type="molecule type" value="Genomic_DNA"/>
</dbReference>
<dbReference type="EMBL" id="CP002685">
    <property type="protein sequence ID" value="AEC05516.1"/>
    <property type="molecule type" value="Genomic_DNA"/>
</dbReference>
<dbReference type="EMBL" id="CP002685">
    <property type="protein sequence ID" value="AEC05517.1"/>
    <property type="molecule type" value="Genomic_DNA"/>
</dbReference>
<dbReference type="EMBL" id="AK317525">
    <property type="protein sequence ID" value="BAH20190.1"/>
    <property type="molecule type" value="mRNA"/>
</dbReference>
<dbReference type="EMBL" id="AK228964">
    <property type="protein sequence ID" value="BAF00853.1"/>
    <property type="molecule type" value="mRNA"/>
</dbReference>
<dbReference type="PIR" id="F84430">
    <property type="entry name" value="F84430"/>
</dbReference>
<dbReference type="RefSeq" id="NP_001030945.1">
    <molecule id="Q9SIS3-2"/>
    <property type="nucleotide sequence ID" value="NM_001035868.2"/>
</dbReference>
<dbReference type="RefSeq" id="NP_178300.3">
    <molecule id="Q9SIS3-1"/>
    <property type="nucleotide sequence ID" value="NM_126252.4"/>
</dbReference>
<dbReference type="SMR" id="Q9SIS3"/>
<dbReference type="FunCoup" id="Q9SIS3">
    <property type="interactions" value="2800"/>
</dbReference>
<dbReference type="STRING" id="3702.Q9SIS3"/>
<dbReference type="GlyGen" id="Q9SIS3">
    <property type="glycosylation" value="1 site"/>
</dbReference>
<dbReference type="iPTMnet" id="Q9SIS3"/>
<dbReference type="PaxDb" id="3702-AT2G01910.1"/>
<dbReference type="ProteomicsDB" id="238510">
    <molecule id="Q9SIS3-1"/>
</dbReference>
<dbReference type="EnsemblPlants" id="AT2G01910.1">
    <molecule id="Q9SIS3-1"/>
    <property type="protein sequence ID" value="AT2G01910.1"/>
    <property type="gene ID" value="AT2G01910"/>
</dbReference>
<dbReference type="EnsemblPlants" id="AT2G01910.2">
    <molecule id="Q9SIS3-2"/>
    <property type="protein sequence ID" value="AT2G01910.2"/>
    <property type="gene ID" value="AT2G01910"/>
</dbReference>
<dbReference type="GeneID" id="814722"/>
<dbReference type="Gramene" id="AT2G01910.1">
    <molecule id="Q9SIS3-1"/>
    <property type="protein sequence ID" value="AT2G01910.1"/>
    <property type="gene ID" value="AT2G01910"/>
</dbReference>
<dbReference type="Gramene" id="AT2G01910.2">
    <molecule id="Q9SIS3-2"/>
    <property type="protein sequence ID" value="AT2G01910.2"/>
    <property type="gene ID" value="AT2G01910"/>
</dbReference>
<dbReference type="KEGG" id="ath:AT2G01910"/>
<dbReference type="Araport" id="AT2G01910"/>
<dbReference type="TAIR" id="AT2G01910">
    <property type="gene designation" value="ATMAP65-6"/>
</dbReference>
<dbReference type="eggNOG" id="KOG4302">
    <property type="taxonomic scope" value="Eukaryota"/>
</dbReference>
<dbReference type="InParanoid" id="Q9SIS3"/>
<dbReference type="OMA" id="GMDFANT"/>
<dbReference type="PhylomeDB" id="Q9SIS3"/>
<dbReference type="PRO" id="PR:Q9SIS3"/>
<dbReference type="Proteomes" id="UP000006548">
    <property type="component" value="Chromosome 2"/>
</dbReference>
<dbReference type="ExpressionAtlas" id="Q9SIS3">
    <property type="expression patterns" value="baseline and differential"/>
</dbReference>
<dbReference type="GO" id="GO:0005874">
    <property type="term" value="C:microtubule"/>
    <property type="evidence" value="ECO:0007669"/>
    <property type="project" value="UniProtKB-KW"/>
</dbReference>
<dbReference type="GO" id="GO:0005739">
    <property type="term" value="C:mitochondrion"/>
    <property type="evidence" value="ECO:0000314"/>
    <property type="project" value="TAIR"/>
</dbReference>
<dbReference type="GO" id="GO:0005634">
    <property type="term" value="C:nucleus"/>
    <property type="evidence" value="ECO:0007669"/>
    <property type="project" value="UniProtKB-SubCell"/>
</dbReference>
<dbReference type="GO" id="GO:0009524">
    <property type="term" value="C:phragmoplast"/>
    <property type="evidence" value="ECO:0000314"/>
    <property type="project" value="TAIR"/>
</dbReference>
<dbReference type="GO" id="GO:0009536">
    <property type="term" value="C:plastid"/>
    <property type="evidence" value="ECO:0007005"/>
    <property type="project" value="TAIR"/>
</dbReference>
<dbReference type="GO" id="GO:0009574">
    <property type="term" value="C:preprophase band"/>
    <property type="evidence" value="ECO:0000314"/>
    <property type="project" value="TAIR"/>
</dbReference>
<dbReference type="GO" id="GO:0008017">
    <property type="term" value="F:microtubule binding"/>
    <property type="evidence" value="ECO:0000314"/>
    <property type="project" value="TAIR"/>
</dbReference>
<dbReference type="GO" id="GO:0051301">
    <property type="term" value="P:cell division"/>
    <property type="evidence" value="ECO:0007669"/>
    <property type="project" value="UniProtKB-KW"/>
</dbReference>
<dbReference type="GO" id="GO:0000226">
    <property type="term" value="P:microtubule cytoskeleton organization"/>
    <property type="evidence" value="ECO:0007669"/>
    <property type="project" value="InterPro"/>
</dbReference>
<dbReference type="FunFam" id="1.20.58.1520:FF:000002">
    <property type="entry name" value="65-kDa microtubule-associated protein 6"/>
    <property type="match status" value="1"/>
</dbReference>
<dbReference type="Gene3D" id="1.20.58.1520">
    <property type="match status" value="1"/>
</dbReference>
<dbReference type="InterPro" id="IPR007145">
    <property type="entry name" value="MAP65_Ase1_PRC1"/>
</dbReference>
<dbReference type="PANTHER" id="PTHR19321:SF0">
    <property type="entry name" value="65-KDA MICROTUBULE-ASSOCIATED PROTEIN 6"/>
    <property type="match status" value="1"/>
</dbReference>
<dbReference type="PANTHER" id="PTHR19321">
    <property type="entry name" value="PROTEIN REGULATOR OF CYTOKINESIS 1 PRC1-RELATED"/>
    <property type="match status" value="1"/>
</dbReference>
<dbReference type="Pfam" id="PF03999">
    <property type="entry name" value="MAP65_ASE1"/>
    <property type="match status" value="1"/>
</dbReference>
<gene>
    <name type="primary">MAP65-6</name>
    <name type="ordered locus">At2g01910</name>
    <name type="ORF">T23K3.10</name>
</gene>
<name>MA656_ARATH</name>